<accession>Q748Z8</accession>
<comment type="function">
    <text evidence="1">Binds to 23S rRNA. Forms part of two intersubunit bridges in the 70S ribosome.</text>
</comment>
<comment type="subunit">
    <text evidence="1">Part of the 50S ribosomal subunit. Forms a cluster with proteins L3 and L19. In the 70S ribosome, L14 and L19 interact and together make contacts with the 16S rRNA in bridges B5 and B8.</text>
</comment>
<comment type="similarity">
    <text evidence="1">Belongs to the universal ribosomal protein uL14 family.</text>
</comment>
<evidence type="ECO:0000255" key="1">
    <source>
        <dbReference type="HAMAP-Rule" id="MF_01367"/>
    </source>
</evidence>
<evidence type="ECO:0000305" key="2"/>
<name>RL14_GEOSL</name>
<proteinExistence type="inferred from homology"/>
<protein>
    <recommendedName>
        <fullName evidence="1">Large ribosomal subunit protein uL14</fullName>
    </recommendedName>
    <alternativeName>
        <fullName evidence="2">50S ribosomal protein L14</fullName>
    </alternativeName>
</protein>
<dbReference type="EMBL" id="AE017180">
    <property type="protein sequence ID" value="AAR36240.1"/>
    <property type="molecule type" value="Genomic_DNA"/>
</dbReference>
<dbReference type="RefSeq" id="NP_953890.1">
    <property type="nucleotide sequence ID" value="NC_002939.5"/>
</dbReference>
<dbReference type="RefSeq" id="WP_010943476.1">
    <property type="nucleotide sequence ID" value="NC_002939.5"/>
</dbReference>
<dbReference type="SMR" id="Q748Z8"/>
<dbReference type="FunCoup" id="Q748Z8">
    <property type="interactions" value="635"/>
</dbReference>
<dbReference type="STRING" id="243231.GSU2847"/>
<dbReference type="EnsemblBacteria" id="AAR36240">
    <property type="protein sequence ID" value="AAR36240"/>
    <property type="gene ID" value="GSU2847"/>
</dbReference>
<dbReference type="KEGG" id="gsu:GSU2847"/>
<dbReference type="PATRIC" id="fig|243231.5.peg.2873"/>
<dbReference type="eggNOG" id="COG0093">
    <property type="taxonomic scope" value="Bacteria"/>
</dbReference>
<dbReference type="HOGENOM" id="CLU_095071_2_1_7"/>
<dbReference type="InParanoid" id="Q748Z8"/>
<dbReference type="OrthoDB" id="9806379at2"/>
<dbReference type="Proteomes" id="UP000000577">
    <property type="component" value="Chromosome"/>
</dbReference>
<dbReference type="GO" id="GO:0022625">
    <property type="term" value="C:cytosolic large ribosomal subunit"/>
    <property type="evidence" value="ECO:0000318"/>
    <property type="project" value="GO_Central"/>
</dbReference>
<dbReference type="GO" id="GO:0070180">
    <property type="term" value="F:large ribosomal subunit rRNA binding"/>
    <property type="evidence" value="ECO:0000318"/>
    <property type="project" value="GO_Central"/>
</dbReference>
<dbReference type="GO" id="GO:0003735">
    <property type="term" value="F:structural constituent of ribosome"/>
    <property type="evidence" value="ECO:0000318"/>
    <property type="project" value="GO_Central"/>
</dbReference>
<dbReference type="GO" id="GO:0006412">
    <property type="term" value="P:translation"/>
    <property type="evidence" value="ECO:0007669"/>
    <property type="project" value="UniProtKB-UniRule"/>
</dbReference>
<dbReference type="CDD" id="cd00337">
    <property type="entry name" value="Ribosomal_uL14"/>
    <property type="match status" value="1"/>
</dbReference>
<dbReference type="FunFam" id="2.40.150.20:FF:000001">
    <property type="entry name" value="50S ribosomal protein L14"/>
    <property type="match status" value="1"/>
</dbReference>
<dbReference type="Gene3D" id="2.40.150.20">
    <property type="entry name" value="Ribosomal protein L14"/>
    <property type="match status" value="1"/>
</dbReference>
<dbReference type="HAMAP" id="MF_01367">
    <property type="entry name" value="Ribosomal_uL14"/>
    <property type="match status" value="1"/>
</dbReference>
<dbReference type="InterPro" id="IPR000218">
    <property type="entry name" value="Ribosomal_uL14"/>
</dbReference>
<dbReference type="InterPro" id="IPR005745">
    <property type="entry name" value="Ribosomal_uL14_bac-type"/>
</dbReference>
<dbReference type="InterPro" id="IPR036853">
    <property type="entry name" value="Ribosomal_uL14_sf"/>
</dbReference>
<dbReference type="NCBIfam" id="TIGR01067">
    <property type="entry name" value="rplN_bact"/>
    <property type="match status" value="1"/>
</dbReference>
<dbReference type="PANTHER" id="PTHR11761">
    <property type="entry name" value="50S/60S RIBOSOMAL PROTEIN L14/L23"/>
    <property type="match status" value="1"/>
</dbReference>
<dbReference type="PANTHER" id="PTHR11761:SF3">
    <property type="entry name" value="LARGE RIBOSOMAL SUBUNIT PROTEIN UL14M"/>
    <property type="match status" value="1"/>
</dbReference>
<dbReference type="Pfam" id="PF00238">
    <property type="entry name" value="Ribosomal_L14"/>
    <property type="match status" value="1"/>
</dbReference>
<dbReference type="SMART" id="SM01374">
    <property type="entry name" value="Ribosomal_L14"/>
    <property type="match status" value="1"/>
</dbReference>
<dbReference type="SUPFAM" id="SSF50193">
    <property type="entry name" value="Ribosomal protein L14"/>
    <property type="match status" value="1"/>
</dbReference>
<sequence>MIQMQTVLDVADNSGAKKLFCIKVLGGSKRKYAGVGDIVVCSVREAVPNAKVKKGDVVKVVIVRTAKEIGRPDGSYIRFDDNSGVVINNQREPVGTRIFGPVARELRAQKFMKIISLAPEVL</sequence>
<gene>
    <name evidence="1" type="primary">rplN</name>
    <name type="ordered locus">GSU2847</name>
</gene>
<keyword id="KW-1185">Reference proteome</keyword>
<keyword id="KW-0687">Ribonucleoprotein</keyword>
<keyword id="KW-0689">Ribosomal protein</keyword>
<keyword id="KW-0694">RNA-binding</keyword>
<keyword id="KW-0699">rRNA-binding</keyword>
<feature type="chain" id="PRO_0000266490" description="Large ribosomal subunit protein uL14">
    <location>
        <begin position="1"/>
        <end position="122"/>
    </location>
</feature>
<reference key="1">
    <citation type="journal article" date="2003" name="Science">
        <title>Genome of Geobacter sulfurreducens: metal reduction in subsurface environments.</title>
        <authorList>
            <person name="Methe B.A."/>
            <person name="Nelson K.E."/>
            <person name="Eisen J.A."/>
            <person name="Paulsen I.T."/>
            <person name="Nelson W.C."/>
            <person name="Heidelberg J.F."/>
            <person name="Wu D."/>
            <person name="Wu M."/>
            <person name="Ward N.L."/>
            <person name="Beanan M.J."/>
            <person name="Dodson R.J."/>
            <person name="Madupu R."/>
            <person name="Brinkac L.M."/>
            <person name="Daugherty S.C."/>
            <person name="DeBoy R.T."/>
            <person name="Durkin A.S."/>
            <person name="Gwinn M.L."/>
            <person name="Kolonay J.F."/>
            <person name="Sullivan S.A."/>
            <person name="Haft D.H."/>
            <person name="Selengut J."/>
            <person name="Davidsen T.M."/>
            <person name="Zafar N."/>
            <person name="White O."/>
            <person name="Tran B."/>
            <person name="Romero C."/>
            <person name="Forberger H.A."/>
            <person name="Weidman J.F."/>
            <person name="Khouri H.M."/>
            <person name="Feldblyum T.V."/>
            <person name="Utterback T.R."/>
            <person name="Van Aken S.E."/>
            <person name="Lovley D.R."/>
            <person name="Fraser C.M."/>
        </authorList>
    </citation>
    <scope>NUCLEOTIDE SEQUENCE [LARGE SCALE GENOMIC DNA]</scope>
    <source>
        <strain>ATCC 51573 / DSM 12127 / PCA</strain>
    </source>
</reference>
<organism>
    <name type="scientific">Geobacter sulfurreducens (strain ATCC 51573 / DSM 12127 / PCA)</name>
    <dbReference type="NCBI Taxonomy" id="243231"/>
    <lineage>
        <taxon>Bacteria</taxon>
        <taxon>Pseudomonadati</taxon>
        <taxon>Thermodesulfobacteriota</taxon>
        <taxon>Desulfuromonadia</taxon>
        <taxon>Geobacterales</taxon>
        <taxon>Geobacteraceae</taxon>
        <taxon>Geobacter</taxon>
    </lineage>
</organism>